<feature type="signal peptide" evidence="5">
    <location>
        <begin position="1"/>
        <end position="14"/>
    </location>
</feature>
<feature type="chain" id="PRO_0000033328" description="Stromal interaction molecule 2">
    <location>
        <begin position="15"/>
        <end position="746"/>
    </location>
</feature>
<feature type="topological domain" description="Extracellular" evidence="2">
    <location>
        <begin position="15"/>
        <end position="218"/>
    </location>
</feature>
<feature type="transmembrane region" description="Helical" evidence="2">
    <location>
        <begin position="219"/>
        <end position="235"/>
    </location>
</feature>
<feature type="topological domain" description="Cytoplasmic" evidence="2">
    <location>
        <begin position="236"/>
        <end position="746"/>
    </location>
</feature>
<feature type="domain" description="EF-hand">
    <location>
        <begin position="67"/>
        <end position="102"/>
    </location>
</feature>
<feature type="domain" description="SAM" evidence="3">
    <location>
        <begin position="136"/>
        <end position="204"/>
    </location>
</feature>
<feature type="region of interest" description="Disordered" evidence="4">
    <location>
        <begin position="483"/>
        <end position="562"/>
    </location>
</feature>
<feature type="region of interest" description="Disordered" evidence="4">
    <location>
        <begin position="685"/>
        <end position="746"/>
    </location>
</feature>
<feature type="coiled-coil region" evidence="2">
    <location>
        <begin position="247"/>
        <end position="394"/>
    </location>
</feature>
<feature type="compositionally biased region" description="Basic residues" evidence="4">
    <location>
        <begin position="537"/>
        <end position="549"/>
    </location>
</feature>
<feature type="compositionally biased region" description="Basic and acidic residues" evidence="4">
    <location>
        <begin position="723"/>
        <end position="732"/>
    </location>
</feature>
<feature type="compositionally biased region" description="Basic residues" evidence="4">
    <location>
        <begin position="733"/>
        <end position="746"/>
    </location>
</feature>
<feature type="binding site" evidence="14">
    <location>
        <position position="80"/>
    </location>
    <ligand>
        <name>Ca(2+)</name>
        <dbReference type="ChEBI" id="CHEBI:29108"/>
    </ligand>
</feature>
<feature type="binding site" evidence="14">
    <location>
        <position position="82"/>
    </location>
    <ligand>
        <name>Ca(2+)</name>
        <dbReference type="ChEBI" id="CHEBI:29108"/>
    </ligand>
</feature>
<feature type="binding site" evidence="14">
    <location>
        <position position="84"/>
    </location>
    <ligand>
        <name>Ca(2+)</name>
        <dbReference type="ChEBI" id="CHEBI:29108"/>
    </ligand>
</feature>
<feature type="binding site" evidence="14">
    <location>
        <position position="91"/>
    </location>
    <ligand>
        <name>Ca(2+)</name>
        <dbReference type="ChEBI" id="CHEBI:29108"/>
    </ligand>
</feature>
<feature type="modified residue" description="Phosphoserine" evidence="16">
    <location>
        <position position="523"/>
    </location>
</feature>
<feature type="modified residue" description="Phosphoserine" evidence="15 16">
    <location>
        <position position="609"/>
    </location>
</feature>
<feature type="modified residue" description="Phosphoserine" evidence="15">
    <location>
        <position position="621"/>
    </location>
</feature>
<feature type="modified residue" description="Phosphoserine" evidence="1">
    <location>
        <position position="640"/>
    </location>
</feature>
<feature type="modified residue" description="Phosphoserine" evidence="1">
    <location>
        <position position="650"/>
    </location>
</feature>
<feature type="modified residue" description="Phosphoserine" evidence="15 16">
    <location>
        <position position="661"/>
    </location>
</feature>
<feature type="modified residue" description="Phosphoserine" evidence="16">
    <location>
        <position position="665"/>
    </location>
</feature>
<feature type="modified residue" description="Phosphoserine" evidence="15">
    <location>
        <position position="680"/>
    </location>
</feature>
<feature type="modified residue" description="Phosphoserine" evidence="17">
    <location>
        <position position="697"/>
    </location>
</feature>
<feature type="glycosylation site" description="N-linked (GlcNAc...) asparagine" evidence="2">
    <location>
        <position position="135"/>
    </location>
</feature>
<feature type="splice variant" id="VSP_057171" description="In isoform 2." evidence="13">
    <original>M</original>
    <variation>MNAAGIRAPEAAGADGTRLAPGGSPCLRRRGRPEESPAAVVAPRGAGELQAAGAPLRFYPASPRRLHRASTPGPAWGWLLRRRRWAAL</variation>
    <location>
        <position position="1"/>
    </location>
</feature>
<feature type="splice variant" id="VSP_057172" description="In isoform 2." evidence="13">
    <original>E</original>
    <variation>EVAASYLIQ</variation>
    <location>
        <position position="383"/>
    </location>
</feature>
<feature type="splice variant" id="VSP_057173" description="In isoform 3." evidence="13">
    <original>WEVPDTASECDS</original>
    <variation>CIHLGLGACKSE</variation>
    <location>
        <begin position="588"/>
        <end position="599"/>
    </location>
</feature>
<feature type="splice variant" id="VSP_057174" description="In isoform 3." evidence="13">
    <location>
        <begin position="600"/>
        <end position="746"/>
    </location>
</feature>
<feature type="mutagenesis site" description="No effect on inhibitory activity; when associated with A-91." evidence="7 9">
    <original>D</original>
    <variation>A</variation>
    <location>
        <position position="80"/>
    </location>
</feature>
<feature type="mutagenesis site" description="No effect on inhibitory activity; when associated with A-80." evidence="7">
    <original>E</original>
    <variation>A</variation>
    <location>
        <position position="91"/>
    </location>
</feature>
<feature type="sequence conflict" description="In Ref. 3; CAB66512." evidence="14" ref="3">
    <original>A</original>
    <variation>P</variation>
    <location>
        <position position="9"/>
    </location>
</feature>
<feature type="sequence conflict" description="In Ref. 4; AAH57231." evidence="14" ref="4">
    <original>R</original>
    <variation>G</variation>
    <location>
        <position position="308"/>
    </location>
</feature>
<feature type="helix" evidence="18">
    <location>
        <begin position="63"/>
        <end position="79"/>
    </location>
</feature>
<feature type="strand" evidence="18">
    <location>
        <begin position="80"/>
        <end position="82"/>
    </location>
</feature>
<feature type="helix" evidence="18">
    <location>
        <begin position="89"/>
        <end position="96"/>
    </location>
</feature>
<feature type="turn" evidence="18">
    <location>
        <begin position="97"/>
        <end position="103"/>
    </location>
</feature>
<feature type="helix" evidence="18">
    <location>
        <begin position="106"/>
        <end position="112"/>
    </location>
</feature>
<feature type="turn" evidence="18">
    <location>
        <begin position="113"/>
        <end position="115"/>
    </location>
</feature>
<feature type="helix" evidence="18">
    <location>
        <begin position="121"/>
        <end position="129"/>
    </location>
</feature>
<feature type="helix" evidence="18">
    <location>
        <begin position="132"/>
        <end position="135"/>
    </location>
</feature>
<feature type="helix" evidence="18">
    <location>
        <begin position="138"/>
        <end position="148"/>
    </location>
</feature>
<feature type="helix" evidence="18">
    <location>
        <begin position="155"/>
        <end position="162"/>
    </location>
</feature>
<feature type="strand" evidence="18">
    <location>
        <begin position="164"/>
        <end position="166"/>
    </location>
</feature>
<feature type="turn" evidence="18">
    <location>
        <begin position="167"/>
        <end position="170"/>
    </location>
</feature>
<feature type="strand" evidence="18">
    <location>
        <begin position="173"/>
        <end position="175"/>
    </location>
</feature>
<feature type="turn" evidence="18">
    <location>
        <begin position="179"/>
        <end position="182"/>
    </location>
</feature>
<feature type="helix" evidence="18">
    <location>
        <begin position="188"/>
        <end position="204"/>
    </location>
</feature>
<accession>Q9P246</accession>
<accession>A6H8L7</accession>
<accession>B7ZVY0</accession>
<accession>Q96BF1</accession>
<accession>Q9BQH2</accession>
<accession>Q9H8R1</accession>
<reference key="1">
    <citation type="journal article" date="2001" name="Biochem. J.">
        <title>Identification and characterization of the STIM (stromal interaction molecule) gene family: coding for a novel class of transmembrane proteins.</title>
        <authorList>
            <person name="Williams R.T."/>
            <person name="Manji S.S.M."/>
            <person name="Parker N.J."/>
            <person name="Hancock M.S."/>
            <person name="van Stekelenburg L."/>
            <person name="Eid J.-P."/>
            <person name="Senior P.V."/>
            <person name="Kazenwadel J.S."/>
            <person name="Shandala T."/>
            <person name="Saint R."/>
            <person name="Smith P.J."/>
            <person name="Dziadek M.A."/>
        </authorList>
    </citation>
    <scope>NUCLEOTIDE SEQUENCE [MRNA] (ISOFORM 1)</scope>
    <scope>PROTEIN SEQUENCE OF 15-24</scope>
    <scope>SUBUNIT</scope>
    <scope>TISSUE SPECIFICITY</scope>
    <scope>GLYCOSYLATION</scope>
    <scope>PHOSPHORYLATION</scope>
    <source>
        <tissue>Fetal brain</tissue>
        <tissue>Kidney</tissue>
    </source>
</reference>
<reference key="2">
    <citation type="journal article" date="2000" name="DNA Res.">
        <title>Prediction of the coding sequences of unidentified human genes. XVII. The complete sequences of 100 new cDNA clones from brain which code for large proteins in vitro.</title>
        <authorList>
            <person name="Nagase T."/>
            <person name="Kikuno R."/>
            <person name="Ishikawa K."/>
            <person name="Hirosawa M."/>
            <person name="Ohara O."/>
        </authorList>
    </citation>
    <scope>NUCLEOTIDE SEQUENCE [LARGE SCALE MRNA] (ISOFORM 1)</scope>
    <source>
        <tissue>Brain</tissue>
    </source>
</reference>
<reference key="3">
    <citation type="journal article" date="2001" name="Genome Res.">
        <title>Towards a catalog of human genes and proteins: sequencing and analysis of 500 novel complete protein coding human cDNAs.</title>
        <authorList>
            <person name="Wiemann S."/>
            <person name="Weil B."/>
            <person name="Wellenreuther R."/>
            <person name="Gassenhuber J."/>
            <person name="Glassl S."/>
            <person name="Ansorge W."/>
            <person name="Boecher M."/>
            <person name="Bloecker H."/>
            <person name="Bauersachs S."/>
            <person name="Blum H."/>
            <person name="Lauber J."/>
            <person name="Duesterhoeft A."/>
            <person name="Beyer A."/>
            <person name="Koehrer K."/>
            <person name="Strack N."/>
            <person name="Mewes H.-W."/>
            <person name="Ottenwaelder B."/>
            <person name="Obermaier B."/>
            <person name="Tampe J."/>
            <person name="Heubner D."/>
            <person name="Wambutt R."/>
            <person name="Korn B."/>
            <person name="Klein M."/>
            <person name="Poustka A."/>
        </authorList>
    </citation>
    <scope>NUCLEOTIDE SEQUENCE [LARGE SCALE MRNA] (ISOFORM 1)</scope>
    <source>
        <tissue>Amygdala</tissue>
    </source>
</reference>
<reference key="4">
    <citation type="journal article" date="2004" name="Genome Res.">
        <title>The status, quality, and expansion of the NIH full-length cDNA project: the Mammalian Gene Collection (MGC).</title>
        <authorList>
            <consortium name="The MGC Project Team"/>
        </authorList>
    </citation>
    <scope>NUCLEOTIDE SEQUENCE [LARGE SCALE MRNA] (ISOFORMS 2 AND 3)</scope>
    <scope>NUCLEOTIDE SEQUENCE [LARGE SCALE MRNA] OF 192-746 (ISOFORM 1)</scope>
    <source>
        <tissue>Brain</tissue>
        <tissue>Retina</tissue>
    </source>
</reference>
<reference key="5">
    <citation type="journal article" date="2004" name="Nat. Genet.">
        <title>Complete sequencing and characterization of 21,243 full-length human cDNAs.</title>
        <authorList>
            <person name="Ota T."/>
            <person name="Suzuki Y."/>
            <person name="Nishikawa T."/>
            <person name="Otsuki T."/>
            <person name="Sugiyama T."/>
            <person name="Irie R."/>
            <person name="Wakamatsu A."/>
            <person name="Hayashi K."/>
            <person name="Sato H."/>
            <person name="Nagai K."/>
            <person name="Kimura K."/>
            <person name="Makita H."/>
            <person name="Sekine M."/>
            <person name="Obayashi M."/>
            <person name="Nishi T."/>
            <person name="Shibahara T."/>
            <person name="Tanaka T."/>
            <person name="Ishii S."/>
            <person name="Yamamoto J."/>
            <person name="Saito K."/>
            <person name="Kawai Y."/>
            <person name="Isono Y."/>
            <person name="Nakamura Y."/>
            <person name="Nagahari K."/>
            <person name="Murakami K."/>
            <person name="Yasuda T."/>
            <person name="Iwayanagi T."/>
            <person name="Wagatsuma M."/>
            <person name="Shiratori A."/>
            <person name="Sudo H."/>
            <person name="Hosoiri T."/>
            <person name="Kaku Y."/>
            <person name="Kodaira H."/>
            <person name="Kondo H."/>
            <person name="Sugawara M."/>
            <person name="Takahashi M."/>
            <person name="Kanda K."/>
            <person name="Yokoi T."/>
            <person name="Furuya T."/>
            <person name="Kikkawa E."/>
            <person name="Omura Y."/>
            <person name="Abe K."/>
            <person name="Kamihara K."/>
            <person name="Katsuta N."/>
            <person name="Sato K."/>
            <person name="Tanikawa M."/>
            <person name="Yamazaki M."/>
            <person name="Ninomiya K."/>
            <person name="Ishibashi T."/>
            <person name="Yamashita H."/>
            <person name="Murakawa K."/>
            <person name="Fujimori K."/>
            <person name="Tanai H."/>
            <person name="Kimata M."/>
            <person name="Watanabe M."/>
            <person name="Hiraoka S."/>
            <person name="Chiba Y."/>
            <person name="Ishida S."/>
            <person name="Ono Y."/>
            <person name="Takiguchi S."/>
            <person name="Watanabe S."/>
            <person name="Yosida M."/>
            <person name="Hotuta T."/>
            <person name="Kusano J."/>
            <person name="Kanehori K."/>
            <person name="Takahashi-Fujii A."/>
            <person name="Hara H."/>
            <person name="Tanase T.-O."/>
            <person name="Nomura Y."/>
            <person name="Togiya S."/>
            <person name="Komai F."/>
            <person name="Hara R."/>
            <person name="Takeuchi K."/>
            <person name="Arita M."/>
            <person name="Imose N."/>
            <person name="Musashino K."/>
            <person name="Yuuki H."/>
            <person name="Oshima A."/>
            <person name="Sasaki N."/>
            <person name="Aotsuka S."/>
            <person name="Yoshikawa Y."/>
            <person name="Matsunawa H."/>
            <person name="Ichihara T."/>
            <person name="Shiohata N."/>
            <person name="Sano S."/>
            <person name="Moriya S."/>
            <person name="Momiyama H."/>
            <person name="Satoh N."/>
            <person name="Takami S."/>
            <person name="Terashima Y."/>
            <person name="Suzuki O."/>
            <person name="Nakagawa S."/>
            <person name="Senoh A."/>
            <person name="Mizoguchi H."/>
            <person name="Goto Y."/>
            <person name="Shimizu F."/>
            <person name="Wakebe H."/>
            <person name="Hishigaki H."/>
            <person name="Watanabe T."/>
            <person name="Sugiyama A."/>
            <person name="Takemoto M."/>
            <person name="Kawakami B."/>
            <person name="Yamazaki M."/>
            <person name="Watanabe K."/>
            <person name="Kumagai A."/>
            <person name="Itakura S."/>
            <person name="Fukuzumi Y."/>
            <person name="Fujimori Y."/>
            <person name="Komiyama M."/>
            <person name="Tashiro H."/>
            <person name="Tanigami A."/>
            <person name="Fujiwara T."/>
            <person name="Ono T."/>
            <person name="Yamada K."/>
            <person name="Fujii Y."/>
            <person name="Ozaki K."/>
            <person name="Hirao M."/>
            <person name="Ohmori Y."/>
            <person name="Kawabata A."/>
            <person name="Hikiji T."/>
            <person name="Kobatake N."/>
            <person name="Inagaki H."/>
            <person name="Ikema Y."/>
            <person name="Okamoto S."/>
            <person name="Okitani R."/>
            <person name="Kawakami T."/>
            <person name="Noguchi S."/>
            <person name="Itoh T."/>
            <person name="Shigeta K."/>
            <person name="Senba T."/>
            <person name="Matsumura K."/>
            <person name="Nakajima Y."/>
            <person name="Mizuno T."/>
            <person name="Morinaga M."/>
            <person name="Sasaki M."/>
            <person name="Togashi T."/>
            <person name="Oyama M."/>
            <person name="Hata H."/>
            <person name="Watanabe M."/>
            <person name="Komatsu T."/>
            <person name="Mizushima-Sugano J."/>
            <person name="Satoh T."/>
            <person name="Shirai Y."/>
            <person name="Takahashi Y."/>
            <person name="Nakagawa K."/>
            <person name="Okumura K."/>
            <person name="Nagase T."/>
            <person name="Nomura N."/>
            <person name="Kikuchi H."/>
            <person name="Masuho Y."/>
            <person name="Yamashita R."/>
            <person name="Nakai K."/>
            <person name="Yada T."/>
            <person name="Nakamura Y."/>
            <person name="Ohara O."/>
            <person name="Isogai T."/>
            <person name="Sugano S."/>
        </authorList>
    </citation>
    <scope>NUCLEOTIDE SEQUENCE [LARGE SCALE MRNA] OF 293-746 (ISOFORM 1)</scope>
    <source>
        <tissue>Ovarian carcinoma</tissue>
    </source>
</reference>
<reference key="6">
    <citation type="journal article" date="2005" name="Curr. Biol.">
        <title>STIM is a Ca2+ sensor essential for Ca2+-store-depletion-triggered Ca2+ influx.</title>
        <authorList>
            <person name="Liou J."/>
            <person name="Kim M.L."/>
            <person name="Heo W.D."/>
            <person name="Jones J.T."/>
            <person name="Myers J.W."/>
            <person name="Ferrell J.E. Jr."/>
            <person name="Meyer T."/>
        </authorList>
    </citation>
    <scope>FUNCTION</scope>
</reference>
<reference key="7">
    <citation type="journal article" date="2006" name="Curr. Biol.">
        <title>STIM2 is an inhibitor of STIM1-mediated store-operated Ca2+ entry.</title>
        <authorList>
            <person name="Soboloff J."/>
            <person name="Spassova M.A."/>
            <person name="Hewavitharana T."/>
            <person name="He L.P."/>
            <person name="Xu W."/>
            <person name="Johnstone L.S."/>
            <person name="Dziadek M.A."/>
            <person name="Gill D.L."/>
        </authorList>
    </citation>
    <scope>FUNCTION</scope>
    <scope>SUBCELLULAR LOCATION</scope>
    <scope>MUTAGENESIS OF ASP-80 AND GLU-91</scope>
</reference>
<reference key="8">
    <citation type="journal article" date="2007" name="Cell">
        <title>STIM2 is a feedback regulator that stabilizes basal cytosolic and endoplasmic reticulum Ca2+ levels.</title>
        <authorList>
            <person name="Brandman O."/>
            <person name="Liou J."/>
            <person name="Park W.S."/>
            <person name="Meyer T."/>
        </authorList>
    </citation>
    <scope>FUNCTION</scope>
    <scope>SUBCELLULAR LOCATION</scope>
    <scope>MUTAGENESIS OF ASP-80</scope>
</reference>
<reference key="9">
    <citation type="journal article" date="2008" name="Biochem. Biophys. Res. Commun.">
        <title>Biophysical characterization of the EF-hand and SAM domain containing Ca2+ sensory region of STIM1 and STIM2.</title>
        <authorList>
            <person name="Zheng L."/>
            <person name="Stathopulos P.B."/>
            <person name="Li G.-Y."/>
            <person name="Ikura M."/>
        </authorList>
    </citation>
    <scope>CALCIUM-BINDING</scope>
</reference>
<reference key="10">
    <citation type="journal article" date="2008" name="FASEB J.">
        <title>STIM2 protein mediates distinct store-dependent and store-independent modes of CRAC channel activation.</title>
        <authorList>
            <person name="Parvez S."/>
            <person name="Beck A."/>
            <person name="Peinelt C."/>
            <person name="Soboloff J."/>
            <person name="Lis A."/>
            <person name="Monteilh-Zoller M."/>
            <person name="Gill D.L."/>
            <person name="Fleig A."/>
            <person name="Penner R."/>
        </authorList>
    </citation>
    <scope>FUNCTION</scope>
    <scope>SUBCELLULAR LOCATION</scope>
    <scope>INTERACTION WITH ORAI1</scope>
</reference>
<reference key="11">
    <citation type="journal article" date="2008" name="Proc. Natl. Acad. Sci. U.S.A.">
        <title>A quantitative atlas of mitotic phosphorylation.</title>
        <authorList>
            <person name="Dephoure N."/>
            <person name="Zhou C."/>
            <person name="Villen J."/>
            <person name="Beausoleil S.A."/>
            <person name="Bakalarski C.E."/>
            <person name="Elledge S.J."/>
            <person name="Gygi S.P."/>
        </authorList>
    </citation>
    <scope>PHOSPHORYLATION [LARGE SCALE ANALYSIS] AT SER-609; SER-621; SER-661 AND SER-680</scope>
    <scope>IDENTIFICATION BY MASS SPECTROMETRY [LARGE SCALE ANALYSIS]</scope>
    <source>
        <tissue>Cervix carcinoma</tissue>
    </source>
</reference>
<reference key="12">
    <citation type="journal article" date="2009" name="J. Biol. Chem.">
        <title>Stromal interaction molecule (STIM) 1 and STIM2 calcium sensing regions exhibit distinct unfolding and oligomerization kinetics.</title>
        <authorList>
            <person name="Stathopulos P.B."/>
            <person name="Zheng L."/>
            <person name="Ikura M."/>
        </authorList>
    </citation>
    <scope>OLIGOMERIZATION</scope>
</reference>
<reference key="13">
    <citation type="journal article" date="2011" name="Sci. Signal.">
        <title>System-wide temporal characterization of the proteome and phosphoproteome of human embryonic stem cell differentiation.</title>
        <authorList>
            <person name="Rigbolt K.T."/>
            <person name="Prokhorova T.A."/>
            <person name="Akimov V."/>
            <person name="Henningsen J."/>
            <person name="Johansen P.T."/>
            <person name="Kratchmarova I."/>
            <person name="Kassem M."/>
            <person name="Mann M."/>
            <person name="Olsen J.V."/>
            <person name="Blagoev B."/>
        </authorList>
    </citation>
    <scope>IDENTIFICATION BY MASS SPECTROMETRY [LARGE SCALE ANALYSIS]</scope>
</reference>
<reference key="14">
    <citation type="journal article" date="2012" name="Cell">
        <title>SARAF inactivates the store operated calcium entry machinery to prevent excess calcium refilling.</title>
        <authorList>
            <person name="Palty R."/>
            <person name="Raveh A."/>
            <person name="Kaminsky I."/>
            <person name="Meller R."/>
            <person name="Reuveny E."/>
        </authorList>
    </citation>
    <scope>FUNCTION</scope>
</reference>
<reference key="15">
    <citation type="journal article" date="2013" name="J. Physiol. (Lond.)">
        <title>STIM2 drives Ca2+ oscillations through store-operated Ca2+ entry caused by mild store depletion.</title>
        <authorList>
            <person name="Thiel M."/>
            <person name="Lis A."/>
            <person name="Penner R."/>
        </authorList>
    </citation>
    <scope>FUNCTION</scope>
</reference>
<reference key="16">
    <citation type="journal article" date="2013" name="J. Proteome Res.">
        <title>Toward a comprehensive characterization of a human cancer cell phosphoproteome.</title>
        <authorList>
            <person name="Zhou H."/>
            <person name="Di Palma S."/>
            <person name="Preisinger C."/>
            <person name="Peng M."/>
            <person name="Polat A.N."/>
            <person name="Heck A.J."/>
            <person name="Mohammed S."/>
        </authorList>
    </citation>
    <scope>PHOSPHORYLATION [LARGE SCALE ANALYSIS] AT SER-523; SER-609; SER-661 AND SER-665</scope>
    <scope>IDENTIFICATION BY MASS SPECTROMETRY [LARGE SCALE ANALYSIS]</scope>
    <source>
        <tissue>Cervix carcinoma</tissue>
        <tissue>Erythroleukemia</tissue>
    </source>
</reference>
<reference key="17">
    <citation type="journal article" date="2014" name="J. Proteomics">
        <title>An enzyme assisted RP-RPLC approach for in-depth analysis of human liver phosphoproteome.</title>
        <authorList>
            <person name="Bian Y."/>
            <person name="Song C."/>
            <person name="Cheng K."/>
            <person name="Dong M."/>
            <person name="Wang F."/>
            <person name="Huang J."/>
            <person name="Sun D."/>
            <person name="Wang L."/>
            <person name="Ye M."/>
            <person name="Zou H."/>
        </authorList>
    </citation>
    <scope>PHOSPHORYLATION [LARGE SCALE ANALYSIS] AT SER-697</scope>
    <scope>IDENTIFICATION BY MASS SPECTROMETRY [LARGE SCALE ANALYSIS]</scope>
    <source>
        <tissue>Liver</tissue>
    </source>
</reference>
<reference key="18">
    <citation type="journal article" date="2011" name="Proc. Natl. Acad. Sci. U.S.A.">
        <title>Auto-inhibitory role of the EF-SAM domain of STIM proteins in store-operated calcium entry.</title>
        <authorList>
            <person name="Zheng L."/>
            <person name="Stathopulos P.B."/>
            <person name="Schindl R."/>
            <person name="Li G.Y."/>
            <person name="Romanin C."/>
            <person name="Ikura M."/>
        </authorList>
    </citation>
    <scope>STRUCTURE BY NMR OF 62-205 IN COMPLEX WITH CALCIUM IONS</scope>
    <scope>FUNCTION</scope>
    <scope>CIRCULAR DICHROISM</scope>
</reference>
<gene>
    <name type="primary">STIM2</name>
    <name type="synonym">KIAA1482</name>
</gene>
<organism>
    <name type="scientific">Homo sapiens</name>
    <name type="common">Human</name>
    <dbReference type="NCBI Taxonomy" id="9606"/>
    <lineage>
        <taxon>Eukaryota</taxon>
        <taxon>Metazoa</taxon>
        <taxon>Chordata</taxon>
        <taxon>Craniata</taxon>
        <taxon>Vertebrata</taxon>
        <taxon>Euteleostomi</taxon>
        <taxon>Mammalia</taxon>
        <taxon>Eutheria</taxon>
        <taxon>Euarchontoglires</taxon>
        <taxon>Primates</taxon>
        <taxon>Haplorrhini</taxon>
        <taxon>Catarrhini</taxon>
        <taxon>Hominidae</taxon>
        <taxon>Homo</taxon>
    </lineage>
</organism>
<name>STIM2_HUMAN</name>
<protein>
    <recommendedName>
        <fullName>Stromal interaction molecule 2</fullName>
    </recommendedName>
</protein>
<proteinExistence type="evidence at protein level"/>
<evidence type="ECO:0000250" key="1">
    <source>
        <dbReference type="UniProtKB" id="P83093"/>
    </source>
</evidence>
<evidence type="ECO:0000255" key="2"/>
<evidence type="ECO:0000255" key="3">
    <source>
        <dbReference type="PROSITE-ProRule" id="PRU00184"/>
    </source>
</evidence>
<evidence type="ECO:0000256" key="4">
    <source>
        <dbReference type="SAM" id="MobiDB-lite"/>
    </source>
</evidence>
<evidence type="ECO:0000269" key="5">
    <source>
    </source>
</evidence>
<evidence type="ECO:0000269" key="6">
    <source>
    </source>
</evidence>
<evidence type="ECO:0000269" key="7">
    <source>
    </source>
</evidence>
<evidence type="ECO:0000269" key="8">
    <source>
    </source>
</evidence>
<evidence type="ECO:0000269" key="9">
    <source>
    </source>
</evidence>
<evidence type="ECO:0000269" key="10">
    <source>
    </source>
</evidence>
<evidence type="ECO:0000269" key="11">
    <source>
    </source>
</evidence>
<evidence type="ECO:0000269" key="12">
    <source>
    </source>
</evidence>
<evidence type="ECO:0000303" key="13">
    <source>
    </source>
</evidence>
<evidence type="ECO:0000305" key="14"/>
<evidence type="ECO:0007744" key="15">
    <source>
    </source>
</evidence>
<evidence type="ECO:0007744" key="16">
    <source>
    </source>
</evidence>
<evidence type="ECO:0007744" key="17">
    <source>
    </source>
</evidence>
<evidence type="ECO:0007829" key="18">
    <source>
        <dbReference type="PDB" id="2L5Y"/>
    </source>
</evidence>
<sequence>MLVLGLLVAGAADGCELVPRHLRGRRATGSAATAASSPAAAAGDSPALMTDPCMSLSPPCFTEEDRFSLEALQTIHKQMDDDKDGGIEVEESDEFIREDMKYKDATNKHSHLHREDKHITIEDLWKRWKTSEVHNWTLEDTLQWLIEFVELPQYEKNFRDNNVKGTTLPRIAVHEPSFMISQLKISDRSHRQKLQLKALDVVLFGPLTRPPHNWMKDFILTVSIVIGVGGCWFAYTQNKTSKEHVAKMMKDLESLQTAEQSLMDLQERLEKAQEENRNVAVEKQNLERKMMDEINYAKEEACRLRELREGAECELSRRQYAEQELEQVRMALKKAEKEFELRSSWSVPDALQKWLQLTHEVEVQYYNIKRQNAEMQLAIAKDEAEKIKKKRSTVFGTLHVAHSSSLDEVDHKILEAKKALSELTTCLRERLFRWQQIEKICGFQIAHNSGLPSLTSSLYSDHSWVVMPRVSIPPYPIAGGVDDLDEDTPPIVSQFPGTMAKPPGSLARSSSLCRSRRSIVPSSPQPQRAQLAPHAPHPSHPRHPHHPQHTPHSLPSPDPDILSVSSCPALYRNEEEEEAIYFSAEKQWEVPDTASECDSLNSSIGRKQSPPLSLEIYQTLSPRKISRDEVSLEDSSRGDSPVTVDVSWGSPDCVGLTETKSMIFSPASKVYNGILEKSCSMNQLSSGIPVPKPRHTSCSSAGNDSKPVQEAPSVARISSIPHDLCHNGEKSKKPSKIKSLFKKKSK</sequence>
<keyword id="KW-0002">3D-structure</keyword>
<keyword id="KW-0025">Alternative splicing</keyword>
<keyword id="KW-0106">Calcium</keyword>
<keyword id="KW-0109">Calcium transport</keyword>
<keyword id="KW-0175">Coiled coil</keyword>
<keyword id="KW-0903">Direct protein sequencing</keyword>
<keyword id="KW-0256">Endoplasmic reticulum</keyword>
<keyword id="KW-0325">Glycoprotein</keyword>
<keyword id="KW-0406">Ion transport</keyword>
<keyword id="KW-0472">Membrane</keyword>
<keyword id="KW-0479">Metal-binding</keyword>
<keyword id="KW-0597">Phosphoprotein</keyword>
<keyword id="KW-1267">Proteomics identification</keyword>
<keyword id="KW-1185">Reference proteome</keyword>
<keyword id="KW-0732">Signal</keyword>
<keyword id="KW-0812">Transmembrane</keyword>
<keyword id="KW-1133">Transmembrane helix</keyword>
<keyword id="KW-0813">Transport</keyword>
<dbReference type="EMBL" id="AF328905">
    <property type="protein sequence ID" value="AAK82337.1"/>
    <property type="molecule type" value="mRNA"/>
</dbReference>
<dbReference type="EMBL" id="AB040915">
    <property type="protein sequence ID" value="BAA96006.1"/>
    <property type="status" value="ALT_SEQ"/>
    <property type="molecule type" value="mRNA"/>
</dbReference>
<dbReference type="EMBL" id="AL136577">
    <property type="protein sequence ID" value="CAB66512.2"/>
    <property type="status" value="ALT_SEQ"/>
    <property type="molecule type" value="mRNA"/>
</dbReference>
<dbReference type="EMBL" id="BC015659">
    <property type="protein sequence ID" value="AAH15659.2"/>
    <property type="molecule type" value="mRNA"/>
</dbReference>
<dbReference type="EMBL" id="BC057231">
    <property type="protein sequence ID" value="AAH57231.1"/>
    <property type="molecule type" value="mRNA"/>
</dbReference>
<dbReference type="EMBL" id="BC136449">
    <property type="protein sequence ID" value="AAI36450.1"/>
    <property type="molecule type" value="mRNA"/>
</dbReference>
<dbReference type="EMBL" id="BC146661">
    <property type="protein sequence ID" value="AAI46662.1"/>
    <property type="molecule type" value="mRNA"/>
</dbReference>
<dbReference type="EMBL" id="BC152554">
    <property type="protein sequence ID" value="AAI52555.1"/>
    <property type="molecule type" value="mRNA"/>
</dbReference>
<dbReference type="EMBL" id="BC171766">
    <property type="protein sequence ID" value="AAI71766.1"/>
    <property type="molecule type" value="mRNA"/>
</dbReference>
<dbReference type="EMBL" id="AK023369">
    <property type="protein sequence ID" value="BAB14545.1"/>
    <property type="status" value="ALT_SEQ"/>
    <property type="molecule type" value="mRNA"/>
</dbReference>
<dbReference type="CCDS" id="CCDS3440.2">
    <molecule id="Q9P246-1"/>
</dbReference>
<dbReference type="CCDS" id="CCDS54752.1">
    <molecule id="Q9P246-3"/>
</dbReference>
<dbReference type="RefSeq" id="NP_001162588.1">
    <molecule id="Q9P246-3"/>
    <property type="nucleotide sequence ID" value="NM_001169117.2"/>
</dbReference>
<dbReference type="RefSeq" id="NP_001162589.1">
    <property type="nucleotide sequence ID" value="NM_001169118.1"/>
</dbReference>
<dbReference type="RefSeq" id="NP_065911.3">
    <molecule id="Q9P246-1"/>
    <property type="nucleotide sequence ID" value="NM_020860.3"/>
</dbReference>
<dbReference type="PDB" id="2L5Y">
    <property type="method" value="NMR"/>
    <property type="chains" value="A=62-205"/>
</dbReference>
<dbReference type="PDBsum" id="2L5Y"/>
<dbReference type="BMRB" id="Q9P246"/>
<dbReference type="SMR" id="Q9P246"/>
<dbReference type="BioGRID" id="121666">
    <property type="interactions" value="176"/>
</dbReference>
<dbReference type="FunCoup" id="Q9P246">
    <property type="interactions" value="3380"/>
</dbReference>
<dbReference type="IntAct" id="Q9P246">
    <property type="interactions" value="55"/>
</dbReference>
<dbReference type="MINT" id="Q9P246"/>
<dbReference type="STRING" id="9606.ENSP00000417569"/>
<dbReference type="ChEMBL" id="CHEMBL4296084"/>
<dbReference type="TCDB" id="1.A.52.1.1">
    <property type="family name" value="the ca(2+) release-activated ca(2+) (crac) channel (crac-c) family"/>
</dbReference>
<dbReference type="GlyCosmos" id="Q9P246">
    <property type="glycosylation" value="1 site, No reported glycans"/>
</dbReference>
<dbReference type="GlyGen" id="Q9P246">
    <property type="glycosylation" value="1 site"/>
</dbReference>
<dbReference type="iPTMnet" id="Q9P246"/>
<dbReference type="PhosphoSitePlus" id="Q9P246"/>
<dbReference type="SwissPalm" id="Q9P246"/>
<dbReference type="BioMuta" id="STIM2"/>
<dbReference type="DMDM" id="17369338"/>
<dbReference type="jPOST" id="Q9P246"/>
<dbReference type="MassIVE" id="Q9P246"/>
<dbReference type="PaxDb" id="9606-ENSP00000417569"/>
<dbReference type="PeptideAtlas" id="Q9P246"/>
<dbReference type="ProteomicsDB" id="83730">
    <molecule id="Q9P246-1"/>
</dbReference>
<dbReference type="Pumba" id="Q9P246"/>
<dbReference type="Antibodypedia" id="10303">
    <property type="antibodies" value="285 antibodies from 37 providers"/>
</dbReference>
<dbReference type="DNASU" id="57620"/>
<dbReference type="Ensembl" id="ENST00000467011.6">
    <molecule id="Q9P246-3"/>
    <property type="protein sequence ID" value="ENSP00000419383.2"/>
    <property type="gene ID" value="ENSG00000109689.20"/>
</dbReference>
<dbReference type="Ensembl" id="ENST00000467087.7">
    <molecule id="Q9P246-1"/>
    <property type="protein sequence ID" value="ENSP00000419073.2"/>
    <property type="gene ID" value="ENSG00000109689.20"/>
</dbReference>
<dbReference type="GeneID" id="57620"/>
<dbReference type="KEGG" id="hsa:57620"/>
<dbReference type="MANE-Select" id="ENST00000467087.7">
    <property type="protein sequence ID" value="ENSP00000419073.2"/>
    <property type="RefSeq nucleotide sequence ID" value="NM_020860.4"/>
    <property type="RefSeq protein sequence ID" value="NP_065911.3"/>
</dbReference>
<dbReference type="UCSC" id="uc003gsg.6">
    <molecule id="Q9P246-1"/>
    <property type="organism name" value="human"/>
</dbReference>
<dbReference type="AGR" id="HGNC:19205"/>
<dbReference type="CTD" id="57620"/>
<dbReference type="DisGeNET" id="57620"/>
<dbReference type="GeneCards" id="STIM2"/>
<dbReference type="HGNC" id="HGNC:19205">
    <property type="gene designation" value="STIM2"/>
</dbReference>
<dbReference type="HPA" id="ENSG00000109689">
    <property type="expression patterns" value="Tissue enhanced (choroid)"/>
</dbReference>
<dbReference type="MIM" id="610841">
    <property type="type" value="gene"/>
</dbReference>
<dbReference type="neXtProt" id="NX_Q9P246"/>
<dbReference type="OpenTargets" id="ENSG00000109689"/>
<dbReference type="PharmGKB" id="PA134926985"/>
<dbReference type="VEuPathDB" id="HostDB:ENSG00000109689"/>
<dbReference type="eggNOG" id="KOG4403">
    <property type="taxonomic scope" value="Eukaryota"/>
</dbReference>
<dbReference type="GeneTree" id="ENSGT00390000000214"/>
<dbReference type="HOGENOM" id="CLU_010588_2_0_1"/>
<dbReference type="InParanoid" id="Q9P246"/>
<dbReference type="OrthoDB" id="9986177at2759"/>
<dbReference type="PAN-GO" id="Q9P246">
    <property type="GO annotations" value="7 GO annotations based on evolutionary models"/>
</dbReference>
<dbReference type="PhylomeDB" id="Q9P246"/>
<dbReference type="PathwayCommons" id="Q9P246"/>
<dbReference type="SignaLink" id="Q9P246"/>
<dbReference type="BioGRID-ORCS" id="57620">
    <property type="hits" value="12 hits in 1090 CRISPR screens"/>
</dbReference>
<dbReference type="ChiTaRS" id="STIM2">
    <property type="organism name" value="human"/>
</dbReference>
<dbReference type="EvolutionaryTrace" id="Q9P246"/>
<dbReference type="GeneWiki" id="STIM2"/>
<dbReference type="GenomeRNAi" id="57620"/>
<dbReference type="Pharos" id="Q9P246">
    <property type="development level" value="Tbio"/>
</dbReference>
<dbReference type="PRO" id="PR:Q9P246"/>
<dbReference type="Proteomes" id="UP000005640">
    <property type="component" value="Chromosome 4"/>
</dbReference>
<dbReference type="RNAct" id="Q9P246">
    <property type="molecule type" value="protein"/>
</dbReference>
<dbReference type="Bgee" id="ENSG00000109689">
    <property type="expression patterns" value="Expressed in olfactory segment of nasal mucosa and 172 other cell types or tissues"/>
</dbReference>
<dbReference type="ExpressionAtlas" id="Q9P246">
    <property type="expression patterns" value="baseline and differential"/>
</dbReference>
<dbReference type="GO" id="GO:0005783">
    <property type="term" value="C:endoplasmic reticulum"/>
    <property type="evidence" value="ECO:0000314"/>
    <property type="project" value="UniProtKB"/>
</dbReference>
<dbReference type="GO" id="GO:0005789">
    <property type="term" value="C:endoplasmic reticulum membrane"/>
    <property type="evidence" value="ECO:0007669"/>
    <property type="project" value="UniProtKB-SubCell"/>
</dbReference>
<dbReference type="GO" id="GO:0005886">
    <property type="term" value="C:plasma membrane"/>
    <property type="evidence" value="ECO:0000314"/>
    <property type="project" value="UniProtKB"/>
</dbReference>
<dbReference type="GO" id="GO:0005246">
    <property type="term" value="F:calcium channel regulator activity"/>
    <property type="evidence" value="ECO:0000315"/>
    <property type="project" value="UniProtKB"/>
</dbReference>
<dbReference type="GO" id="GO:0005509">
    <property type="term" value="F:calcium ion binding"/>
    <property type="evidence" value="ECO:0000314"/>
    <property type="project" value="UniProtKB"/>
</dbReference>
<dbReference type="GO" id="GO:0015279">
    <property type="term" value="F:store-operated calcium channel activity"/>
    <property type="evidence" value="ECO:0000314"/>
    <property type="project" value="UniProtKB"/>
</dbReference>
<dbReference type="GO" id="GO:0032237">
    <property type="term" value="P:activation of store-operated calcium channel activity"/>
    <property type="evidence" value="ECO:0000314"/>
    <property type="project" value="UniProtKB"/>
</dbReference>
<dbReference type="GO" id="GO:0006874">
    <property type="term" value="P:intracellular calcium ion homeostasis"/>
    <property type="evidence" value="ECO:0000315"/>
    <property type="project" value="UniProtKB"/>
</dbReference>
<dbReference type="GO" id="GO:0051928">
    <property type="term" value="P:positive regulation of calcium ion transport"/>
    <property type="evidence" value="ECO:0000314"/>
    <property type="project" value="UniProtKB"/>
</dbReference>
<dbReference type="GO" id="GO:0002115">
    <property type="term" value="P:store-operated calcium entry"/>
    <property type="evidence" value="ECO:0000318"/>
    <property type="project" value="GO_Central"/>
</dbReference>
<dbReference type="CDD" id="cd09574">
    <property type="entry name" value="SAM_STIM2"/>
    <property type="match status" value="1"/>
</dbReference>
<dbReference type="CDD" id="cd11722">
    <property type="entry name" value="SOAR"/>
    <property type="match status" value="1"/>
</dbReference>
<dbReference type="FunFam" id="1.10.150.50:FF:000009">
    <property type="entry name" value="Stromal interaction molecule 1"/>
    <property type="match status" value="1"/>
</dbReference>
<dbReference type="FunFam" id="1.10.238.180:FF:000001">
    <property type="entry name" value="Stromal interaction molecule 1"/>
    <property type="match status" value="1"/>
</dbReference>
<dbReference type="FunFam" id="1.10.287.3550:FF:000001">
    <property type="entry name" value="Stromal interaction molecule 1"/>
    <property type="match status" value="1"/>
</dbReference>
<dbReference type="FunFam" id="1.20.5.340:FF:000011">
    <property type="entry name" value="Stromal interaction molecule 1"/>
    <property type="match status" value="1"/>
</dbReference>
<dbReference type="Gene3D" id="1.10.238.180">
    <property type="match status" value="1"/>
</dbReference>
<dbReference type="Gene3D" id="1.10.287.3550">
    <property type="match status" value="1"/>
</dbReference>
<dbReference type="Gene3D" id="1.20.5.340">
    <property type="match status" value="1"/>
</dbReference>
<dbReference type="Gene3D" id="1.10.150.50">
    <property type="entry name" value="Transcription Factor, Ets-1"/>
    <property type="match status" value="1"/>
</dbReference>
<dbReference type="InterPro" id="IPR001660">
    <property type="entry name" value="SAM"/>
</dbReference>
<dbReference type="InterPro" id="IPR013761">
    <property type="entry name" value="SAM/pointed_sf"/>
</dbReference>
<dbReference type="InterPro" id="IPR032393">
    <property type="entry name" value="SOAR"/>
</dbReference>
<dbReference type="InterPro" id="IPR037608">
    <property type="entry name" value="STIM"/>
</dbReference>
<dbReference type="InterPro" id="IPR037610">
    <property type="entry name" value="STIM2_SAM"/>
</dbReference>
<dbReference type="PANTHER" id="PTHR15136:SF2">
    <property type="entry name" value="STROMAL INTERACTION MOLECULE 2"/>
    <property type="match status" value="1"/>
</dbReference>
<dbReference type="PANTHER" id="PTHR15136">
    <property type="entry name" value="STROMAL INTERACTION MOLECULE HOMOLOG"/>
    <property type="match status" value="1"/>
</dbReference>
<dbReference type="Pfam" id="PF07647">
    <property type="entry name" value="SAM_2"/>
    <property type="match status" value="1"/>
</dbReference>
<dbReference type="Pfam" id="PF16533">
    <property type="entry name" value="SOAR"/>
    <property type="match status" value="1"/>
</dbReference>
<dbReference type="SUPFAM" id="SSF47769">
    <property type="entry name" value="SAM/Pointed domain"/>
    <property type="match status" value="1"/>
</dbReference>
<dbReference type="PROSITE" id="PS50105">
    <property type="entry name" value="SAM_DOMAIN"/>
    <property type="match status" value="1"/>
</dbReference>
<comment type="function">
    <text evidence="6 7 8 9 10 11 12">Plays a role in mediating store-operated Ca(2+) entry (SOCE), a Ca(2+) influx following depletion of intracellular Ca(2+) stores. Functions as a highly sensitive Ca(2+) sensor in the endoplasmic reticulum which activates both store-operated and store-independent Ca(2+)-influx. Regulates basal cytosolic and endoplasmic reticulum Ca(2+) concentrations. Upon mild variations of the endoplasmic reticulum Ca(2+) concentration, translocates from the endoplasmic reticulum to the plasma membrane where it probably activates the Ca(2+) release-activated Ca(2+) (CRAC) channels ORAI1, ORAI2 and ORAI3. May inhibit STIM1-mediated Ca(2+) influx.</text>
</comment>
<comment type="subunit">
    <text evidence="5 8 10">Oligomer with STIM1. Interacts with ORAI1.</text>
</comment>
<comment type="interaction">
    <interactant intactId="EBI-448891">
        <id>Q9P246</id>
    </interactant>
    <interactant intactId="EBI-448878">
        <id>Q13586</id>
        <label>STIM1</label>
    </interactant>
    <organismsDiffer>false</organismsDiffer>
    <experiments>9</experiments>
</comment>
<comment type="subcellular location">
    <subcellularLocation>
        <location evidence="7 8 9">Endoplasmic reticulum membrane</location>
        <topology evidence="7 8 9">Single-pass type I membrane protein</topology>
    </subcellularLocation>
    <text>Dynamically translocates from a uniform endoplasmic reticulum distribution to punctual endoplasmic reticulum-plasma membrane junctions in response to decrease in endoplasmic reticulum Ca(2+) concentration.</text>
</comment>
<comment type="alternative products">
    <event type="alternative splicing"/>
    <isoform>
        <id>Q9P246-1</id>
        <name>1</name>
        <sequence type="displayed"/>
    </isoform>
    <isoform>
        <id>Q9P246-2</id>
        <name>2</name>
        <sequence type="described" ref="VSP_057171 VSP_057172"/>
    </isoform>
    <isoform>
        <id>Q9P246-3</id>
        <name>3</name>
        <sequence type="described" ref="VSP_057173 VSP_057174"/>
    </isoform>
</comment>
<comment type="tissue specificity">
    <text evidence="5">Expressed in all tissues and tumor cell lines examined.</text>
</comment>
<comment type="PTM">
    <text evidence="5">Glycosylated.</text>
</comment>
<comment type="PTM">
    <text evidence="5">Phosphorylated predominantly on Ser residues.</text>
</comment>
<comment type="sequence caution" evidence="14">
    <conflict type="miscellaneous discrepancy">
        <sequence resource="EMBL-CDS" id="BAA96006"/>
    </conflict>
    <text>Unusual initiator. The initiator methionine is coded by a non-canonical CTG leucine codon.</text>
</comment>
<comment type="sequence caution" evidence="14">
    <conflict type="erroneous initiation">
        <sequence resource="EMBL-CDS" id="BAB14545"/>
    </conflict>
    <text>Truncated N-terminus.</text>
</comment>
<comment type="sequence caution" evidence="14">
    <conflict type="miscellaneous discrepancy">
        <sequence resource="EMBL-CDS" id="BAB14545"/>
    </conflict>
    <text>Probable cloning artifact.</text>
</comment>
<comment type="sequence caution" evidence="14">
    <conflict type="miscellaneous discrepancy">
        <sequence resource="EMBL-CDS" id="CAB66512"/>
    </conflict>
    <text>Unusual initiator. The initiator methionine is coded by a non-canonical CTG leucine codon.</text>
</comment>